<evidence type="ECO:0000250" key="1"/>
<evidence type="ECO:0000255" key="2">
    <source>
        <dbReference type="PROSITE-ProRule" id="PRU00648"/>
    </source>
</evidence>
<evidence type="ECO:0000305" key="3"/>
<comment type="function">
    <text evidence="1">Glycosidase.</text>
</comment>
<comment type="cofactor">
    <cofactor evidence="1">
        <name>NAD(+)</name>
        <dbReference type="ChEBI" id="CHEBI:57540"/>
    </cofactor>
    <text evidence="1">Binds 1 NAD(+) per subunit. The NAD(+) cannot dissociate.</text>
</comment>
<comment type="PTM">
    <text>Predicted to be exported by the Tat system. The position of the signal peptide cleavage has not been experimentally proven.</text>
</comment>
<comment type="similarity">
    <text evidence="3">Belongs to the Gfo/Idh/MocA family. Glycosyl hydrolase 109 subfamily.</text>
</comment>
<feature type="signal peptide" description="Tat-type signal" evidence="2">
    <location>
        <begin position="1"/>
        <end position="31"/>
    </location>
</feature>
<feature type="chain" id="PRO_5000224660" description="Glycosyl hydrolase family 109 protein">
    <location>
        <begin position="32"/>
        <end position="459"/>
    </location>
</feature>
<feature type="binding site" evidence="1">
    <location>
        <begin position="64"/>
        <end position="65"/>
    </location>
    <ligand>
        <name>NAD(+)</name>
        <dbReference type="ChEBI" id="CHEBI:57540"/>
    </ligand>
</feature>
<feature type="binding site" evidence="1">
    <location>
        <position position="86"/>
    </location>
    <ligand>
        <name>NAD(+)</name>
        <dbReference type="ChEBI" id="CHEBI:57540"/>
    </ligand>
</feature>
<feature type="binding site" evidence="1">
    <location>
        <begin position="135"/>
        <end position="138"/>
    </location>
    <ligand>
        <name>NAD(+)</name>
        <dbReference type="ChEBI" id="CHEBI:57540"/>
    </ligand>
</feature>
<feature type="binding site" evidence="1">
    <location>
        <begin position="155"/>
        <end position="156"/>
    </location>
    <ligand>
        <name>NAD(+)</name>
        <dbReference type="ChEBI" id="CHEBI:57540"/>
    </ligand>
</feature>
<feature type="binding site" evidence="1">
    <location>
        <position position="184"/>
    </location>
    <ligand>
        <name>NAD(+)</name>
        <dbReference type="ChEBI" id="CHEBI:57540"/>
    </ligand>
</feature>
<feature type="binding site" evidence="1">
    <location>
        <position position="213"/>
    </location>
    <ligand>
        <name>substrate</name>
    </ligand>
</feature>
<feature type="binding site" evidence="1">
    <location>
        <position position="232"/>
    </location>
    <ligand>
        <name>substrate</name>
    </ligand>
</feature>
<feature type="binding site" evidence="1">
    <location>
        <begin position="244"/>
        <end position="247"/>
    </location>
    <ligand>
        <name>substrate</name>
    </ligand>
</feature>
<feature type="binding site" evidence="1">
    <location>
        <position position="244"/>
    </location>
    <ligand>
        <name>NAD(+)</name>
        <dbReference type="ChEBI" id="CHEBI:57540"/>
    </ligand>
</feature>
<feature type="binding site" evidence="1">
    <location>
        <position position="326"/>
    </location>
    <ligand>
        <name>substrate</name>
    </ligand>
</feature>
<protein>
    <recommendedName>
        <fullName>Glycosyl hydrolase family 109 protein</fullName>
        <ecNumber>3.2.1.-</ecNumber>
    </recommendedName>
</protein>
<proteinExistence type="inferred from homology"/>
<gene>
    <name type="ordered locus">Sbal_2793</name>
</gene>
<keyword id="KW-0326">Glycosidase</keyword>
<keyword id="KW-0378">Hydrolase</keyword>
<keyword id="KW-0520">NAD</keyword>
<keyword id="KW-1185">Reference proteome</keyword>
<keyword id="KW-0732">Signal</keyword>
<organism>
    <name type="scientific">Shewanella baltica (strain OS155 / ATCC BAA-1091)</name>
    <dbReference type="NCBI Taxonomy" id="325240"/>
    <lineage>
        <taxon>Bacteria</taxon>
        <taxon>Pseudomonadati</taxon>
        <taxon>Pseudomonadota</taxon>
        <taxon>Gammaproteobacteria</taxon>
        <taxon>Alteromonadales</taxon>
        <taxon>Shewanellaceae</taxon>
        <taxon>Shewanella</taxon>
    </lineage>
</organism>
<name>GH109_SHEB5</name>
<dbReference type="EC" id="3.2.1.-"/>
<dbReference type="EMBL" id="CP000563">
    <property type="protein sequence ID" value="ABN62280.1"/>
    <property type="molecule type" value="Genomic_DNA"/>
</dbReference>
<dbReference type="RefSeq" id="WP_011847211.1">
    <property type="nucleotide sequence ID" value="NC_009052.1"/>
</dbReference>
<dbReference type="SMR" id="A3D6B7"/>
<dbReference type="STRING" id="325240.Sbal_2793"/>
<dbReference type="CAZy" id="GH109">
    <property type="family name" value="Glycoside Hydrolase Family 109"/>
</dbReference>
<dbReference type="KEGG" id="sbl:Sbal_2793"/>
<dbReference type="HOGENOM" id="CLU_046965_0_0_6"/>
<dbReference type="OrthoDB" id="9792935at2"/>
<dbReference type="Proteomes" id="UP000001557">
    <property type="component" value="Chromosome"/>
</dbReference>
<dbReference type="GO" id="GO:0016798">
    <property type="term" value="F:hydrolase activity, acting on glycosyl bonds"/>
    <property type="evidence" value="ECO:0007669"/>
    <property type="project" value="UniProtKB-KW"/>
</dbReference>
<dbReference type="GO" id="GO:0000166">
    <property type="term" value="F:nucleotide binding"/>
    <property type="evidence" value="ECO:0007669"/>
    <property type="project" value="InterPro"/>
</dbReference>
<dbReference type="Gene3D" id="3.30.360.10">
    <property type="entry name" value="Dihydrodipicolinate Reductase, domain 2"/>
    <property type="match status" value="1"/>
</dbReference>
<dbReference type="Gene3D" id="3.40.50.720">
    <property type="entry name" value="NAD(P)-binding Rossmann-like Domain"/>
    <property type="match status" value="1"/>
</dbReference>
<dbReference type="InterPro" id="IPR000683">
    <property type="entry name" value="Gfo/Idh/MocA-like_OxRdtase_N"/>
</dbReference>
<dbReference type="InterPro" id="IPR050463">
    <property type="entry name" value="Gfo/Idh/MocA_oxidrdct_glycsds"/>
</dbReference>
<dbReference type="InterPro" id="IPR049303">
    <property type="entry name" value="Glyco_hydro_109_C"/>
</dbReference>
<dbReference type="InterPro" id="IPR036291">
    <property type="entry name" value="NAD(P)-bd_dom_sf"/>
</dbReference>
<dbReference type="InterPro" id="IPR006311">
    <property type="entry name" value="TAT_signal"/>
</dbReference>
<dbReference type="InterPro" id="IPR019546">
    <property type="entry name" value="TAT_signal_bac_arc"/>
</dbReference>
<dbReference type="NCBIfam" id="TIGR01409">
    <property type="entry name" value="TAT_signal_seq"/>
    <property type="match status" value="1"/>
</dbReference>
<dbReference type="PANTHER" id="PTHR43818">
    <property type="entry name" value="BCDNA.GH03377"/>
    <property type="match status" value="1"/>
</dbReference>
<dbReference type="PANTHER" id="PTHR43818:SF1">
    <property type="entry name" value="GLYCOSYL HYDROLASE FAMILY 109 PROTEIN"/>
    <property type="match status" value="1"/>
</dbReference>
<dbReference type="Pfam" id="PF01408">
    <property type="entry name" value="GFO_IDH_MocA"/>
    <property type="match status" value="1"/>
</dbReference>
<dbReference type="Pfam" id="PF21252">
    <property type="entry name" value="Glyco_hydro_109_C"/>
    <property type="match status" value="1"/>
</dbReference>
<dbReference type="Pfam" id="PF10518">
    <property type="entry name" value="TAT_signal"/>
    <property type="match status" value="1"/>
</dbReference>
<dbReference type="SUPFAM" id="SSF51735">
    <property type="entry name" value="NAD(P)-binding Rossmann-fold domains"/>
    <property type="match status" value="1"/>
</dbReference>
<dbReference type="PROSITE" id="PS51318">
    <property type="entry name" value="TAT"/>
    <property type="match status" value="1"/>
</dbReference>
<reference key="1">
    <citation type="submission" date="2007-02" db="EMBL/GenBank/DDBJ databases">
        <title>Complete sequence of chromosome of Shewanella baltica OS155.</title>
        <authorList>
            <consortium name="US DOE Joint Genome Institute"/>
            <person name="Copeland A."/>
            <person name="Lucas S."/>
            <person name="Lapidus A."/>
            <person name="Barry K."/>
            <person name="Detter J.C."/>
            <person name="Glavina del Rio T."/>
            <person name="Hammon N."/>
            <person name="Israni S."/>
            <person name="Dalin E."/>
            <person name="Tice H."/>
            <person name="Pitluck S."/>
            <person name="Sims D.R."/>
            <person name="Brettin T."/>
            <person name="Bruce D."/>
            <person name="Han C."/>
            <person name="Tapia R."/>
            <person name="Brainard J."/>
            <person name="Schmutz J."/>
            <person name="Larimer F."/>
            <person name="Land M."/>
            <person name="Hauser L."/>
            <person name="Kyrpides N."/>
            <person name="Mikhailova N."/>
            <person name="Brettar I."/>
            <person name="Klappenbach J."/>
            <person name="Konstantinidis K."/>
            <person name="Rodrigues J."/>
            <person name="Tiedje J."/>
            <person name="Richardson P."/>
        </authorList>
    </citation>
    <scope>NUCLEOTIDE SEQUENCE [LARGE SCALE GENOMIC DNA]</scope>
    <source>
        <strain>OS155 / ATCC BAA-1091</strain>
    </source>
</reference>
<sequence>MHNIHRRNFLKAAGAATAGLVTANIALNAYASSVAPKPQAGKSVIGLIAPKMDVVRVGFIGVGERGFSHVEQFCHLEGVELKAICDTHQAVLDRAVDHIVKQNRPKPAVYTGNDLSYRDLLSRDDIDIVIISTPWEWHAPMAIETMESGKHAFVEVPMALTVEECWQVVDTAERTQKNCMMMENVNYGREELMVLNMVRQGVFGELLHGEAAYIHELRWQMKEIDHKTGSWRTYWHTKRNGNLYPTHGLGPVSQYMNINRGDRFDYLTSMSSPALGRALYAKREFPADHERNQLKYINGDINTSLIKTVKGRTIMVQHDTTTPRPYSRHNLIQGTNGVFAGFPNRIAVENGGFGQSYHEWDMDMQKWYDKYDHPLWQRIGKEAEINGGHGGMDFVMLWRMIYCLRNGEALDQDVYDGASWSVVNILSEHSLNDRSNSVTFPDFTRGAWQTAKPLGIVGA</sequence>
<accession>A3D6B7</accession>